<sequence>MQDFDFSFNPKACEGCGAKCCVGESGYIFLNIQEMQQISAFLKLELEEFSQKYVKKVGYKFSLLEKDAKELGLACVFLDLETKKCQIYSVRPKQCQTFPFWEGVKTFSKEQKEAFCQSCPGITQKTKETKVR</sequence>
<evidence type="ECO:0000305" key="1"/>
<organism>
    <name type="scientific">Helicobacter pylori (strain ATCC 700392 / 26695)</name>
    <name type="common">Campylobacter pylori</name>
    <dbReference type="NCBI Taxonomy" id="85962"/>
    <lineage>
        <taxon>Bacteria</taxon>
        <taxon>Pseudomonadati</taxon>
        <taxon>Campylobacterota</taxon>
        <taxon>Epsilonproteobacteria</taxon>
        <taxon>Campylobacterales</taxon>
        <taxon>Helicobacteraceae</taxon>
        <taxon>Helicobacter</taxon>
    </lineage>
</organism>
<name>Y274_HELPY</name>
<proteinExistence type="predicted"/>
<protein>
    <recommendedName>
        <fullName>Uncharacterized protein HP_0274</fullName>
    </recommendedName>
</protein>
<accession>P56132</accession>
<keyword id="KW-1185">Reference proteome</keyword>
<dbReference type="EMBL" id="AE000511">
    <property type="protein sequence ID" value="AAD07338.1"/>
    <property type="molecule type" value="Genomic_DNA"/>
</dbReference>
<dbReference type="PIR" id="B64554">
    <property type="entry name" value="B64554"/>
</dbReference>
<dbReference type="RefSeq" id="NP_207072.1">
    <property type="nucleotide sequence ID" value="NC_000915.1"/>
</dbReference>
<dbReference type="RefSeq" id="WP_001150530.1">
    <property type="nucleotide sequence ID" value="NC_018939.1"/>
</dbReference>
<dbReference type="DIP" id="DIP-3321N"/>
<dbReference type="IntAct" id="P56132">
    <property type="interactions" value="13"/>
</dbReference>
<dbReference type="MINT" id="P56132"/>
<dbReference type="STRING" id="85962.HP_0274"/>
<dbReference type="PaxDb" id="85962-C694_01385"/>
<dbReference type="EnsemblBacteria" id="AAD07338">
    <property type="protein sequence ID" value="AAD07338"/>
    <property type="gene ID" value="HP_0274"/>
</dbReference>
<dbReference type="KEGG" id="heo:C694_01385"/>
<dbReference type="KEGG" id="hpy:HP_0274"/>
<dbReference type="PATRIC" id="fig|85962.47.peg.294"/>
<dbReference type="eggNOG" id="COG0727">
    <property type="taxonomic scope" value="Bacteria"/>
</dbReference>
<dbReference type="InParanoid" id="P56132"/>
<dbReference type="OrthoDB" id="9810361at2"/>
<dbReference type="PhylomeDB" id="P56132"/>
<dbReference type="Proteomes" id="UP000000429">
    <property type="component" value="Chromosome"/>
</dbReference>
<dbReference type="InterPro" id="IPR005358">
    <property type="entry name" value="Puta_zinc/iron-chelating_dom"/>
</dbReference>
<dbReference type="PANTHER" id="PTHR35866">
    <property type="entry name" value="PUTATIVE-RELATED"/>
    <property type="match status" value="1"/>
</dbReference>
<dbReference type="PANTHER" id="PTHR35866:SF1">
    <property type="entry name" value="YKGJ FAMILY CYSTEINE CLUSTER PROTEIN"/>
    <property type="match status" value="1"/>
</dbReference>
<dbReference type="Pfam" id="PF03692">
    <property type="entry name" value="CxxCxxCC"/>
    <property type="match status" value="1"/>
</dbReference>
<feature type="chain" id="PRO_0000128681" description="Uncharacterized protein HP_0274">
    <location>
        <begin position="1"/>
        <end position="132"/>
    </location>
</feature>
<comment type="similarity">
    <text evidence="1">To M.jannaschii MJ0661.</text>
</comment>
<reference key="1">
    <citation type="journal article" date="1997" name="Nature">
        <title>The complete genome sequence of the gastric pathogen Helicobacter pylori.</title>
        <authorList>
            <person name="Tomb J.-F."/>
            <person name="White O."/>
            <person name="Kerlavage A.R."/>
            <person name="Clayton R.A."/>
            <person name="Sutton G.G."/>
            <person name="Fleischmann R.D."/>
            <person name="Ketchum K.A."/>
            <person name="Klenk H.-P."/>
            <person name="Gill S.R."/>
            <person name="Dougherty B.A."/>
            <person name="Nelson K.E."/>
            <person name="Quackenbush J."/>
            <person name="Zhou L."/>
            <person name="Kirkness E.F."/>
            <person name="Peterson S.N."/>
            <person name="Loftus B.J."/>
            <person name="Richardson D.L."/>
            <person name="Dodson R.J."/>
            <person name="Khalak H.G."/>
            <person name="Glodek A."/>
            <person name="McKenney K."/>
            <person name="FitzGerald L.M."/>
            <person name="Lee N."/>
            <person name="Adams M.D."/>
            <person name="Hickey E.K."/>
            <person name="Berg D.E."/>
            <person name="Gocayne J.D."/>
            <person name="Utterback T.R."/>
            <person name="Peterson J.D."/>
            <person name="Kelley J.M."/>
            <person name="Cotton M.D."/>
            <person name="Weidman J.F."/>
            <person name="Fujii C."/>
            <person name="Bowman C."/>
            <person name="Watthey L."/>
            <person name="Wallin E."/>
            <person name="Hayes W.S."/>
            <person name="Borodovsky M."/>
            <person name="Karp P.D."/>
            <person name="Smith H.O."/>
            <person name="Fraser C.M."/>
            <person name="Venter J.C."/>
        </authorList>
    </citation>
    <scope>NUCLEOTIDE SEQUENCE [LARGE SCALE GENOMIC DNA]</scope>
    <source>
        <strain>ATCC 700392 / 26695</strain>
    </source>
</reference>
<gene>
    <name type="ordered locus">HP_0274</name>
</gene>